<name>LMBD1_ASPTN</name>
<evidence type="ECO:0000250" key="1"/>
<evidence type="ECO:0000255" key="2"/>
<evidence type="ECO:0000256" key="3">
    <source>
        <dbReference type="SAM" id="MobiDB-lite"/>
    </source>
</evidence>
<evidence type="ECO:0000305" key="4"/>
<feature type="chain" id="PRO_0000365827" description="Probable lysosomal cobalamin transporter">
    <location>
        <begin position="1"/>
        <end position="578"/>
    </location>
</feature>
<feature type="transmembrane region" description="Helical" evidence="2">
    <location>
        <begin position="8"/>
        <end position="28"/>
    </location>
</feature>
<feature type="transmembrane region" description="Helical" evidence="2">
    <location>
        <begin position="46"/>
        <end position="66"/>
    </location>
</feature>
<feature type="transmembrane region" description="Helical" evidence="2">
    <location>
        <begin position="95"/>
        <end position="115"/>
    </location>
</feature>
<feature type="transmembrane region" description="Helical" evidence="2">
    <location>
        <begin position="145"/>
        <end position="165"/>
    </location>
</feature>
<feature type="transmembrane region" description="Helical" evidence="2">
    <location>
        <begin position="188"/>
        <end position="208"/>
    </location>
</feature>
<feature type="transmembrane region" description="Helical" evidence="2">
    <location>
        <begin position="312"/>
        <end position="332"/>
    </location>
</feature>
<feature type="transmembrane region" description="Helical" evidence="2">
    <location>
        <begin position="347"/>
        <end position="367"/>
    </location>
</feature>
<feature type="transmembrane region" description="Helical" evidence="2">
    <location>
        <begin position="375"/>
        <end position="395"/>
    </location>
</feature>
<feature type="transmembrane region" description="Helical" evidence="2">
    <location>
        <begin position="419"/>
        <end position="439"/>
    </location>
</feature>
<feature type="transmembrane region" description="Helical" evidence="2">
    <location>
        <begin position="506"/>
        <end position="526"/>
    </location>
</feature>
<feature type="region of interest" description="Disordered" evidence="3">
    <location>
        <begin position="539"/>
        <end position="578"/>
    </location>
</feature>
<feature type="compositionally biased region" description="Acidic residues" evidence="3">
    <location>
        <begin position="540"/>
        <end position="552"/>
    </location>
</feature>
<feature type="glycosylation site" description="N-linked (GlcNAc...) asparagine" evidence="2">
    <location>
        <position position="70"/>
    </location>
</feature>
<feature type="glycosylation site" description="N-linked (GlcNAc...) asparagine" evidence="2">
    <location>
        <position position="168"/>
    </location>
</feature>
<protein>
    <recommendedName>
        <fullName>Probable lysosomal cobalamin transporter</fullName>
    </recommendedName>
</protein>
<gene>
    <name type="ORF">ATEG_00015</name>
</gene>
<reference key="1">
    <citation type="submission" date="2005-09" db="EMBL/GenBank/DDBJ databases">
        <title>Annotation of the Aspergillus terreus NIH2624 genome.</title>
        <authorList>
            <person name="Birren B.W."/>
            <person name="Lander E.S."/>
            <person name="Galagan J.E."/>
            <person name="Nusbaum C."/>
            <person name="Devon K."/>
            <person name="Henn M."/>
            <person name="Ma L.-J."/>
            <person name="Jaffe D.B."/>
            <person name="Butler J."/>
            <person name="Alvarez P."/>
            <person name="Gnerre S."/>
            <person name="Grabherr M."/>
            <person name="Kleber M."/>
            <person name="Mauceli E.W."/>
            <person name="Brockman W."/>
            <person name="Rounsley S."/>
            <person name="Young S.K."/>
            <person name="LaButti K."/>
            <person name="Pushparaj V."/>
            <person name="DeCaprio D."/>
            <person name="Crawford M."/>
            <person name="Koehrsen M."/>
            <person name="Engels R."/>
            <person name="Montgomery P."/>
            <person name="Pearson M."/>
            <person name="Howarth C."/>
            <person name="Larson L."/>
            <person name="Luoma S."/>
            <person name="White J."/>
            <person name="Alvarado L."/>
            <person name="Kodira C.D."/>
            <person name="Zeng Q."/>
            <person name="Oleary S."/>
            <person name="Yandava C."/>
            <person name="Denning D.W."/>
            <person name="Nierman W.C."/>
            <person name="Milne T."/>
            <person name="Madden K."/>
        </authorList>
    </citation>
    <scope>NUCLEOTIDE SEQUENCE [LARGE SCALE GENOMIC DNA]</scope>
    <source>
        <strain>NIH 2624 / FGSC A1156</strain>
    </source>
</reference>
<comment type="function">
    <text evidence="1">Probable lysosomal cobalamin transporter. Required to export cobalamin from lysosomes allowing its conversion to cofactors (By similarity).</text>
</comment>
<comment type="subcellular location">
    <subcellularLocation>
        <location evidence="1">Lysosome membrane</location>
        <topology evidence="1">Multi-pass membrane protein</topology>
    </subcellularLocation>
</comment>
<comment type="similarity">
    <text evidence="4">Belongs to the LIMR family. LMBRD1 subfamily.</text>
</comment>
<keyword id="KW-0846">Cobalamin</keyword>
<keyword id="KW-0170">Cobalt</keyword>
<keyword id="KW-0325">Glycoprotein</keyword>
<keyword id="KW-0458">Lysosome</keyword>
<keyword id="KW-0472">Membrane</keyword>
<keyword id="KW-1185">Reference proteome</keyword>
<keyword id="KW-0812">Transmembrane</keyword>
<keyword id="KW-1133">Transmembrane helix</keyword>
<keyword id="KW-0813">Transport</keyword>
<sequence length="578" mass="64777">MALLQTSLIWVVYAIAIAVLIAVASVFIYVYQTPRDRSPSVTLTCIFAITTLLATVLLLPVDVALVSSTNSSALGRRKDWATDHEVNKILFSLKVVYYLLYSLDALLCLLVIPFTYFWYEEYDEVAAEEGEQTTGNRFWAAFKYTITFIAIVIVLFLVGFFVPVAKDNHSGGLDYFKKLLTENRGERALTFALGLLITIGLCLYVLYTSTGLALLPVSLIKTAPSISAPNLKATTAMQLDSNRERQRQLEGRCGGNTELLSSKDRRELDMLVREERTLIRRQRLADEAQGEGRSWLMRAWLKTEAVFRPFKLLGGIILLIIALVIWVSMLLTAIDKATNSFCKYHCGYILGHITVFNPINWVFVQAAKVFPVDYVIFTLLVLLFFCSSVVGIAIVGIRFLWIRIFQIRKGHTSPQALLLTTAMLMLTILALNYSVSMVVAPQYATFGPQTFCDRTTGTFGEQADCSNARHLIKPCSEMIKNPAASGVCTPSIASTFLNRVTINFPFFGVIFFWGQFVFLGVYLIVVVASLFRSPKLDERQMDEDAEEAEEEGLLASTGRRLDTAWQDITGRSNRQRDS</sequence>
<organism>
    <name type="scientific">Aspergillus terreus (strain NIH 2624 / FGSC A1156)</name>
    <dbReference type="NCBI Taxonomy" id="341663"/>
    <lineage>
        <taxon>Eukaryota</taxon>
        <taxon>Fungi</taxon>
        <taxon>Dikarya</taxon>
        <taxon>Ascomycota</taxon>
        <taxon>Pezizomycotina</taxon>
        <taxon>Eurotiomycetes</taxon>
        <taxon>Eurotiomycetidae</taxon>
        <taxon>Eurotiales</taxon>
        <taxon>Aspergillaceae</taxon>
        <taxon>Aspergillus</taxon>
        <taxon>Aspergillus subgen. Circumdati</taxon>
    </lineage>
</organism>
<dbReference type="EMBL" id="CH476594">
    <property type="protein sequence ID" value="EAU38661.1"/>
    <property type="molecule type" value="Genomic_DNA"/>
</dbReference>
<dbReference type="RefSeq" id="XP_001210101.1">
    <property type="nucleotide sequence ID" value="XM_001210101.1"/>
</dbReference>
<dbReference type="SMR" id="Q0D219"/>
<dbReference type="STRING" id="341663.Q0D219"/>
<dbReference type="EnsemblFungi" id="EAU38661">
    <property type="protein sequence ID" value="EAU38661"/>
    <property type="gene ID" value="ATEG_00015"/>
</dbReference>
<dbReference type="GeneID" id="4354771"/>
<dbReference type="VEuPathDB" id="FungiDB:ATEG_00015"/>
<dbReference type="eggNOG" id="ENOG502QQ2T">
    <property type="taxonomic scope" value="Eukaryota"/>
</dbReference>
<dbReference type="HOGENOM" id="CLU_028341_1_0_1"/>
<dbReference type="OMA" id="FWAQFVF"/>
<dbReference type="OrthoDB" id="73273at2759"/>
<dbReference type="Proteomes" id="UP000007963">
    <property type="component" value="Unassembled WGS sequence"/>
</dbReference>
<dbReference type="GO" id="GO:0005774">
    <property type="term" value="C:vacuolar membrane"/>
    <property type="evidence" value="ECO:0007669"/>
    <property type="project" value="TreeGrafter"/>
</dbReference>
<dbReference type="GO" id="GO:0031419">
    <property type="term" value="F:cobalamin binding"/>
    <property type="evidence" value="ECO:0007669"/>
    <property type="project" value="UniProtKB-KW"/>
</dbReference>
<dbReference type="GO" id="GO:0072665">
    <property type="term" value="P:protein localization to vacuole"/>
    <property type="evidence" value="ECO:0007669"/>
    <property type="project" value="TreeGrafter"/>
</dbReference>
<dbReference type="InterPro" id="IPR050854">
    <property type="entry name" value="LMBD1_LysCbl_Transport"/>
</dbReference>
<dbReference type="InterPro" id="IPR006876">
    <property type="entry name" value="LMBR1-like_membr_prot"/>
</dbReference>
<dbReference type="PANTHER" id="PTHR16130:SF2">
    <property type="entry name" value="LYSOSOMAL COBALAMIN TRANSPORT ESCORT PROTEIN LMBD1"/>
    <property type="match status" value="1"/>
</dbReference>
<dbReference type="PANTHER" id="PTHR16130">
    <property type="entry name" value="LYSOSOMAL COBALAMIN TRANSPORTER-RELATED"/>
    <property type="match status" value="1"/>
</dbReference>
<dbReference type="Pfam" id="PF04791">
    <property type="entry name" value="LMBR1"/>
    <property type="match status" value="1"/>
</dbReference>
<proteinExistence type="inferred from homology"/>
<accession>Q0D219</accession>